<sequence length="123" mass="14818">MDNKTYEISSAEWEVMNIIWMKKYASANNIIEEIQMQRDWSPKTIRTLITRLYKKGFIDRKKDNKIFQYYSLVEESDIKYKTSKNFINKVYKGGFNSLVLNFVEKEDLSQDEIEELRNILNKK</sequence>
<proteinExistence type="inferred from homology"/>
<accession>O54281</accession>
<accession>O54285</accession>
<evidence type="ECO:0000250" key="1"/>
<evidence type="ECO:0000305" key="2"/>
<gene>
    <name type="primary">mecI</name>
</gene>
<reference key="1">
    <citation type="journal article" date="1998" name="J. Bacteriol.">
        <title>Genetic organization of the mecA region in methicillin-susceptible and methicillin-resistant strains of Staphylococcus sciuri.</title>
        <authorList>
            <person name="Wu S."/>
            <person name="de Lencastre H."/>
            <person name="Tomasz A."/>
        </authorList>
    </citation>
    <scope>NUCLEOTIDE SEQUENCE [GENOMIC DNA]</scope>
    <source>
        <strain>Subsp. rodentium / K3</strain>
        <strain>Subsp. rodentium / K8</strain>
    </source>
</reference>
<keyword id="KW-0046">Antibiotic resistance</keyword>
<keyword id="KW-0963">Cytoplasm</keyword>
<keyword id="KW-0238">DNA-binding</keyword>
<keyword id="KW-0678">Repressor</keyword>
<keyword id="KW-0804">Transcription</keyword>
<keyword id="KW-0805">Transcription regulation</keyword>
<comment type="function">
    <text evidence="1">Transcriptional repressor that constitutively blocks the transcription of the gene for the penicillin-binding protein MecA. Binds DNA as a dimer (By similarity).</text>
</comment>
<comment type="subunit">
    <text evidence="1">Monomer and homodimer.</text>
</comment>
<comment type="subcellular location">
    <subcellularLocation>
        <location evidence="2">Cytoplasm</location>
    </subcellularLocation>
</comment>
<comment type="PTM">
    <text evidence="1">Upon exposure to beta-lactams, proteolytic cleavage at a single site impairs dimerization and abolishes repressor activity.</text>
</comment>
<comment type="similarity">
    <text evidence="2">Belongs to the BlaI transcriptional regulatory family.</text>
</comment>
<organism>
    <name type="scientific">Mammaliicoccus sciuri</name>
    <name type="common">Staphylococcus sciuri</name>
    <dbReference type="NCBI Taxonomy" id="1296"/>
    <lineage>
        <taxon>Bacteria</taxon>
        <taxon>Bacillati</taxon>
        <taxon>Bacillota</taxon>
        <taxon>Bacilli</taxon>
        <taxon>Bacillales</taxon>
        <taxon>Staphylococcaceae</taxon>
        <taxon>Mammaliicoccus</taxon>
    </lineage>
</organism>
<feature type="chain" id="PRO_0000062799" description="Methicillin resistance regulatory protein MecI">
    <location>
        <begin position="1"/>
        <end position="123"/>
    </location>
</feature>
<feature type="DNA-binding region" description="H-T-H motif" evidence="1">
    <location>
        <begin position="7"/>
        <end position="71"/>
    </location>
</feature>
<feature type="region of interest" description="Important for dimerization" evidence="1">
    <location>
        <begin position="74"/>
        <end position="123"/>
    </location>
</feature>
<feature type="site" description="Cleavage" evidence="1">
    <location>
        <begin position="101"/>
        <end position="102"/>
    </location>
</feature>
<feature type="sequence variant" description="In strain: K8.">
    <original>NI</original>
    <variation>YM</variation>
    <location>
        <begin position="29"/>
        <end position="30"/>
    </location>
</feature>
<feature type="sequence variant" description="In strain: K8.">
    <original>R</original>
    <variation>K</variation>
    <location>
        <position position="38"/>
    </location>
</feature>
<dbReference type="EMBL" id="Y13095">
    <property type="protein sequence ID" value="CAA73540.1"/>
    <property type="molecule type" value="Genomic_DNA"/>
</dbReference>
<dbReference type="EMBL" id="Y13096">
    <property type="protein sequence ID" value="CAA73545.1"/>
    <property type="molecule type" value="Genomic_DNA"/>
</dbReference>
<dbReference type="SMR" id="O54281"/>
<dbReference type="GO" id="GO:0005737">
    <property type="term" value="C:cytoplasm"/>
    <property type="evidence" value="ECO:0007669"/>
    <property type="project" value="UniProtKB-SubCell"/>
</dbReference>
<dbReference type="GO" id="GO:0003677">
    <property type="term" value="F:DNA binding"/>
    <property type="evidence" value="ECO:0007669"/>
    <property type="project" value="UniProtKB-KW"/>
</dbReference>
<dbReference type="GO" id="GO:0045892">
    <property type="term" value="P:negative regulation of DNA-templated transcription"/>
    <property type="evidence" value="ECO:0007669"/>
    <property type="project" value="InterPro"/>
</dbReference>
<dbReference type="GO" id="GO:0046677">
    <property type="term" value="P:response to antibiotic"/>
    <property type="evidence" value="ECO:0007669"/>
    <property type="project" value="UniProtKB-KW"/>
</dbReference>
<dbReference type="Gene3D" id="1.10.4040.10">
    <property type="entry name" value="Penicillinase repressor domain"/>
    <property type="match status" value="1"/>
</dbReference>
<dbReference type="Gene3D" id="1.10.10.10">
    <property type="entry name" value="Winged helix-like DNA-binding domain superfamily/Winged helix DNA-binding domain"/>
    <property type="match status" value="1"/>
</dbReference>
<dbReference type="InterPro" id="IPR005650">
    <property type="entry name" value="BlaI_family"/>
</dbReference>
<dbReference type="InterPro" id="IPR036388">
    <property type="entry name" value="WH-like_DNA-bd_sf"/>
</dbReference>
<dbReference type="InterPro" id="IPR036390">
    <property type="entry name" value="WH_DNA-bd_sf"/>
</dbReference>
<dbReference type="NCBIfam" id="NF000243">
    <property type="entry name" value="MecI_of_mecA"/>
    <property type="match status" value="1"/>
</dbReference>
<dbReference type="Pfam" id="PF03965">
    <property type="entry name" value="Penicillinase_R"/>
    <property type="match status" value="1"/>
</dbReference>
<dbReference type="PIRSF" id="PIRSF019455">
    <property type="entry name" value="CopR_AtkY"/>
    <property type="match status" value="1"/>
</dbReference>
<dbReference type="SUPFAM" id="SSF46785">
    <property type="entry name" value="Winged helix' DNA-binding domain"/>
    <property type="match status" value="1"/>
</dbReference>
<name>MECI_MAMSC</name>
<protein>
    <recommendedName>
        <fullName>Methicillin resistance regulatory protein MecI</fullName>
    </recommendedName>
</protein>